<reference key="1">
    <citation type="journal article" date="2009" name="PLoS ONE">
        <title>Salmonella paratyphi C: genetic divergence from Salmonella choleraesuis and pathogenic convergence with Salmonella typhi.</title>
        <authorList>
            <person name="Liu W.-Q."/>
            <person name="Feng Y."/>
            <person name="Wang Y."/>
            <person name="Zou Q.-H."/>
            <person name="Chen F."/>
            <person name="Guo J.-T."/>
            <person name="Peng Y.-H."/>
            <person name="Jin Y."/>
            <person name="Li Y.-G."/>
            <person name="Hu S.-N."/>
            <person name="Johnston R.N."/>
            <person name="Liu G.-R."/>
            <person name="Liu S.-L."/>
        </authorList>
    </citation>
    <scope>NUCLEOTIDE SEQUENCE [LARGE SCALE GENOMIC DNA]</scope>
    <source>
        <strain>RKS4594</strain>
    </source>
</reference>
<name>EFG_SALPC</name>
<evidence type="ECO:0000255" key="1">
    <source>
        <dbReference type="HAMAP-Rule" id="MF_00054"/>
    </source>
</evidence>
<protein>
    <recommendedName>
        <fullName evidence="1">Elongation factor G</fullName>
        <shortName evidence="1">EF-G</shortName>
    </recommendedName>
</protein>
<comment type="function">
    <text evidence="1">Catalyzes the GTP-dependent ribosomal translocation step during translation elongation. During this step, the ribosome changes from the pre-translocational (PRE) to the post-translocational (POST) state as the newly formed A-site-bound peptidyl-tRNA and P-site-bound deacylated tRNA move to the P and E sites, respectively. Catalyzes the coordinated movement of the two tRNA molecules, the mRNA and conformational changes in the ribosome.</text>
</comment>
<comment type="subcellular location">
    <subcellularLocation>
        <location evidence="1">Cytoplasm</location>
    </subcellularLocation>
</comment>
<comment type="similarity">
    <text evidence="1">Belongs to the TRAFAC class translation factor GTPase superfamily. Classic translation factor GTPase family. EF-G/EF-2 subfamily.</text>
</comment>
<keyword id="KW-0963">Cytoplasm</keyword>
<keyword id="KW-0251">Elongation factor</keyword>
<keyword id="KW-0342">GTP-binding</keyword>
<keyword id="KW-0547">Nucleotide-binding</keyword>
<keyword id="KW-0648">Protein biosynthesis</keyword>
<feature type="chain" id="PRO_1000201485" description="Elongation factor G">
    <location>
        <begin position="1"/>
        <end position="704"/>
    </location>
</feature>
<feature type="domain" description="tr-type G">
    <location>
        <begin position="8"/>
        <end position="290"/>
    </location>
</feature>
<feature type="binding site" evidence="1">
    <location>
        <begin position="17"/>
        <end position="24"/>
    </location>
    <ligand>
        <name>GTP</name>
        <dbReference type="ChEBI" id="CHEBI:37565"/>
    </ligand>
</feature>
<feature type="binding site" evidence="1">
    <location>
        <begin position="88"/>
        <end position="92"/>
    </location>
    <ligand>
        <name>GTP</name>
        <dbReference type="ChEBI" id="CHEBI:37565"/>
    </ligand>
</feature>
<feature type="binding site" evidence="1">
    <location>
        <begin position="142"/>
        <end position="145"/>
    </location>
    <ligand>
        <name>GTP</name>
        <dbReference type="ChEBI" id="CHEBI:37565"/>
    </ligand>
</feature>
<accession>C0Q0C2</accession>
<sequence>MARTTPIARYRNIGISAHIDAGKTTTTERILFYTGVNHKIGEVHDGAATMDWMEQEQERGITITSAATTAFWSGMAKQYEPHRINIIDTPGHVDFTIEVERSMRVLDGAVMVYCAVGGVQPQSETVWRQANKYKVPRIAFVNKMDRMGANFLKVVGQIKTRLGANPVPLQLAIGAEEGFTGVVDLVKMKAINWNDADQGVTFEYEDIPADMQDLANEWHQNLIESAAEASEELMEKYLGGEELTEEEIKQALRQRVLNNEIILVTCGSAFKNKGVQAMLDAVIDYLPSPVDVPAINGILDDGKDTPAERHASDDEPFSALAFKIATDPFVGNLTFFRVYSGVVNSGDTVLNSVKTARERFGRIVQMHANKREEIKEVRAGDIAAAIGLKDVTTGDTLCDPENPIILERMEFPEPVISIAVEPKTKADQEKMGLALGRLAKEDPSFRVWTDEESNQTIIAGMGELHLDIIVDRMKREFNVEANVGKPQVAYREAIRAKVTDIEGKHAKQSGGRGQYGHVVIDMYPLEPGSNPKGYEFINDIKGGVIPGEYIPAVDKGIQEQLKSGPLAGYPVVDLGVRLHFGSYHDVDSSELAFKLAASIAFKEGFKKAKPVLLEPIMKVEVETPEENTGDVIGDLSRRRGMLKGQESEVTGVKIHAEVPLSEMFGYATQLRSLTKGRASYTMEFLKYDDAPNNVAQAVIEARGK</sequence>
<proteinExistence type="inferred from homology"/>
<gene>
    <name evidence="1" type="primary">fusA</name>
    <name type="ordered locus">SPC_3515</name>
</gene>
<organism>
    <name type="scientific">Salmonella paratyphi C (strain RKS4594)</name>
    <dbReference type="NCBI Taxonomy" id="476213"/>
    <lineage>
        <taxon>Bacteria</taxon>
        <taxon>Pseudomonadati</taxon>
        <taxon>Pseudomonadota</taxon>
        <taxon>Gammaproteobacteria</taxon>
        <taxon>Enterobacterales</taxon>
        <taxon>Enterobacteriaceae</taxon>
        <taxon>Salmonella</taxon>
    </lineage>
</organism>
<dbReference type="EMBL" id="CP000857">
    <property type="protein sequence ID" value="ACN47599.1"/>
    <property type="molecule type" value="Genomic_DNA"/>
</dbReference>
<dbReference type="RefSeq" id="WP_000124693.1">
    <property type="nucleotide sequence ID" value="NC_012125.1"/>
</dbReference>
<dbReference type="SMR" id="C0Q0C2"/>
<dbReference type="KEGG" id="sei:SPC_3515"/>
<dbReference type="HOGENOM" id="CLU_002794_4_1_6"/>
<dbReference type="Proteomes" id="UP000001599">
    <property type="component" value="Chromosome"/>
</dbReference>
<dbReference type="GO" id="GO:0005737">
    <property type="term" value="C:cytoplasm"/>
    <property type="evidence" value="ECO:0007669"/>
    <property type="project" value="UniProtKB-SubCell"/>
</dbReference>
<dbReference type="GO" id="GO:0005525">
    <property type="term" value="F:GTP binding"/>
    <property type="evidence" value="ECO:0007669"/>
    <property type="project" value="UniProtKB-UniRule"/>
</dbReference>
<dbReference type="GO" id="GO:0003924">
    <property type="term" value="F:GTPase activity"/>
    <property type="evidence" value="ECO:0007669"/>
    <property type="project" value="InterPro"/>
</dbReference>
<dbReference type="GO" id="GO:0097216">
    <property type="term" value="F:guanosine tetraphosphate binding"/>
    <property type="evidence" value="ECO:0007669"/>
    <property type="project" value="UniProtKB-ARBA"/>
</dbReference>
<dbReference type="GO" id="GO:0003746">
    <property type="term" value="F:translation elongation factor activity"/>
    <property type="evidence" value="ECO:0007669"/>
    <property type="project" value="UniProtKB-UniRule"/>
</dbReference>
<dbReference type="GO" id="GO:0032790">
    <property type="term" value="P:ribosome disassembly"/>
    <property type="evidence" value="ECO:0007669"/>
    <property type="project" value="TreeGrafter"/>
</dbReference>
<dbReference type="CDD" id="cd01886">
    <property type="entry name" value="EF-G"/>
    <property type="match status" value="1"/>
</dbReference>
<dbReference type="CDD" id="cd16262">
    <property type="entry name" value="EFG_III"/>
    <property type="match status" value="1"/>
</dbReference>
<dbReference type="CDD" id="cd01434">
    <property type="entry name" value="EFG_mtEFG1_IV"/>
    <property type="match status" value="1"/>
</dbReference>
<dbReference type="CDD" id="cd03713">
    <property type="entry name" value="EFG_mtEFG_C"/>
    <property type="match status" value="1"/>
</dbReference>
<dbReference type="CDD" id="cd04088">
    <property type="entry name" value="EFG_mtEFG_II"/>
    <property type="match status" value="1"/>
</dbReference>
<dbReference type="FunFam" id="2.40.30.10:FF:000006">
    <property type="entry name" value="Elongation factor G"/>
    <property type="match status" value="1"/>
</dbReference>
<dbReference type="FunFam" id="3.30.230.10:FF:000003">
    <property type="entry name" value="Elongation factor G"/>
    <property type="match status" value="1"/>
</dbReference>
<dbReference type="FunFam" id="3.30.70.240:FF:000001">
    <property type="entry name" value="Elongation factor G"/>
    <property type="match status" value="1"/>
</dbReference>
<dbReference type="FunFam" id="3.30.70.870:FF:000001">
    <property type="entry name" value="Elongation factor G"/>
    <property type="match status" value="1"/>
</dbReference>
<dbReference type="FunFam" id="3.40.50.300:FF:000029">
    <property type="entry name" value="Elongation factor G"/>
    <property type="match status" value="1"/>
</dbReference>
<dbReference type="Gene3D" id="3.30.230.10">
    <property type="match status" value="1"/>
</dbReference>
<dbReference type="Gene3D" id="3.30.70.240">
    <property type="match status" value="1"/>
</dbReference>
<dbReference type="Gene3D" id="3.30.70.870">
    <property type="entry name" value="Elongation Factor G (Translational Gtpase), domain 3"/>
    <property type="match status" value="1"/>
</dbReference>
<dbReference type="Gene3D" id="3.40.50.300">
    <property type="entry name" value="P-loop containing nucleotide triphosphate hydrolases"/>
    <property type="match status" value="1"/>
</dbReference>
<dbReference type="Gene3D" id="2.40.30.10">
    <property type="entry name" value="Translation factors"/>
    <property type="match status" value="1"/>
</dbReference>
<dbReference type="HAMAP" id="MF_00054_B">
    <property type="entry name" value="EF_G_EF_2_B"/>
    <property type="match status" value="1"/>
</dbReference>
<dbReference type="InterPro" id="IPR041095">
    <property type="entry name" value="EFG_II"/>
</dbReference>
<dbReference type="InterPro" id="IPR009022">
    <property type="entry name" value="EFG_III"/>
</dbReference>
<dbReference type="InterPro" id="IPR035647">
    <property type="entry name" value="EFG_III/V"/>
</dbReference>
<dbReference type="InterPro" id="IPR047872">
    <property type="entry name" value="EFG_IV"/>
</dbReference>
<dbReference type="InterPro" id="IPR035649">
    <property type="entry name" value="EFG_V"/>
</dbReference>
<dbReference type="InterPro" id="IPR000640">
    <property type="entry name" value="EFG_V-like"/>
</dbReference>
<dbReference type="InterPro" id="IPR004161">
    <property type="entry name" value="EFTu-like_2"/>
</dbReference>
<dbReference type="InterPro" id="IPR031157">
    <property type="entry name" value="G_TR_CS"/>
</dbReference>
<dbReference type="InterPro" id="IPR027417">
    <property type="entry name" value="P-loop_NTPase"/>
</dbReference>
<dbReference type="InterPro" id="IPR020568">
    <property type="entry name" value="Ribosomal_Su5_D2-typ_SF"/>
</dbReference>
<dbReference type="InterPro" id="IPR014721">
    <property type="entry name" value="Ribsml_uS5_D2-typ_fold_subgr"/>
</dbReference>
<dbReference type="InterPro" id="IPR005225">
    <property type="entry name" value="Small_GTP-bd"/>
</dbReference>
<dbReference type="InterPro" id="IPR000795">
    <property type="entry name" value="T_Tr_GTP-bd_dom"/>
</dbReference>
<dbReference type="InterPro" id="IPR009000">
    <property type="entry name" value="Transl_B-barrel_sf"/>
</dbReference>
<dbReference type="InterPro" id="IPR004540">
    <property type="entry name" value="Transl_elong_EFG/EF2"/>
</dbReference>
<dbReference type="InterPro" id="IPR005517">
    <property type="entry name" value="Transl_elong_EFG/EF2_IV"/>
</dbReference>
<dbReference type="NCBIfam" id="TIGR00484">
    <property type="entry name" value="EF-G"/>
    <property type="match status" value="1"/>
</dbReference>
<dbReference type="NCBIfam" id="NF009381">
    <property type="entry name" value="PRK12740.1-5"/>
    <property type="match status" value="1"/>
</dbReference>
<dbReference type="NCBIfam" id="TIGR00231">
    <property type="entry name" value="small_GTP"/>
    <property type="match status" value="1"/>
</dbReference>
<dbReference type="PANTHER" id="PTHR43261:SF1">
    <property type="entry name" value="RIBOSOME-RELEASING FACTOR 2, MITOCHONDRIAL"/>
    <property type="match status" value="1"/>
</dbReference>
<dbReference type="PANTHER" id="PTHR43261">
    <property type="entry name" value="TRANSLATION ELONGATION FACTOR G-RELATED"/>
    <property type="match status" value="1"/>
</dbReference>
<dbReference type="Pfam" id="PF00679">
    <property type="entry name" value="EFG_C"/>
    <property type="match status" value="1"/>
</dbReference>
<dbReference type="Pfam" id="PF14492">
    <property type="entry name" value="EFG_III"/>
    <property type="match status" value="1"/>
</dbReference>
<dbReference type="Pfam" id="PF03764">
    <property type="entry name" value="EFG_IV"/>
    <property type="match status" value="1"/>
</dbReference>
<dbReference type="Pfam" id="PF00009">
    <property type="entry name" value="GTP_EFTU"/>
    <property type="match status" value="1"/>
</dbReference>
<dbReference type="Pfam" id="PF03144">
    <property type="entry name" value="GTP_EFTU_D2"/>
    <property type="match status" value="1"/>
</dbReference>
<dbReference type="PRINTS" id="PR00315">
    <property type="entry name" value="ELONGATNFCT"/>
</dbReference>
<dbReference type="SMART" id="SM00838">
    <property type="entry name" value="EFG_C"/>
    <property type="match status" value="1"/>
</dbReference>
<dbReference type="SMART" id="SM00889">
    <property type="entry name" value="EFG_IV"/>
    <property type="match status" value="1"/>
</dbReference>
<dbReference type="SUPFAM" id="SSF54980">
    <property type="entry name" value="EF-G C-terminal domain-like"/>
    <property type="match status" value="2"/>
</dbReference>
<dbReference type="SUPFAM" id="SSF52540">
    <property type="entry name" value="P-loop containing nucleoside triphosphate hydrolases"/>
    <property type="match status" value="1"/>
</dbReference>
<dbReference type="SUPFAM" id="SSF54211">
    <property type="entry name" value="Ribosomal protein S5 domain 2-like"/>
    <property type="match status" value="1"/>
</dbReference>
<dbReference type="SUPFAM" id="SSF50447">
    <property type="entry name" value="Translation proteins"/>
    <property type="match status" value="1"/>
</dbReference>
<dbReference type="PROSITE" id="PS00301">
    <property type="entry name" value="G_TR_1"/>
    <property type="match status" value="1"/>
</dbReference>
<dbReference type="PROSITE" id="PS51722">
    <property type="entry name" value="G_TR_2"/>
    <property type="match status" value="1"/>
</dbReference>